<dbReference type="EC" id="3.2.2.8" evidence="1"/>
<dbReference type="EMBL" id="CP000038">
    <property type="protein sequence ID" value="AAZ88868.1"/>
    <property type="molecule type" value="Genomic_DNA"/>
</dbReference>
<dbReference type="RefSeq" id="WP_000415433.1">
    <property type="nucleotide sequence ID" value="NC_007384.1"/>
</dbReference>
<dbReference type="SMR" id="Q3Z044"/>
<dbReference type="GeneID" id="93775020"/>
<dbReference type="KEGG" id="ssn:SSON_2218"/>
<dbReference type="HOGENOM" id="CLU_036838_2_0_6"/>
<dbReference type="Proteomes" id="UP000002529">
    <property type="component" value="Chromosome"/>
</dbReference>
<dbReference type="GO" id="GO:0005829">
    <property type="term" value="C:cytosol"/>
    <property type="evidence" value="ECO:0007669"/>
    <property type="project" value="TreeGrafter"/>
</dbReference>
<dbReference type="GO" id="GO:0005509">
    <property type="term" value="F:calcium ion binding"/>
    <property type="evidence" value="ECO:0007669"/>
    <property type="project" value="UniProtKB-UniRule"/>
</dbReference>
<dbReference type="GO" id="GO:0008477">
    <property type="term" value="F:purine nucleosidase activity"/>
    <property type="evidence" value="ECO:0007669"/>
    <property type="project" value="TreeGrafter"/>
</dbReference>
<dbReference type="GO" id="GO:0045437">
    <property type="term" value="F:uridine nucleosidase activity"/>
    <property type="evidence" value="ECO:0007669"/>
    <property type="project" value="UniProtKB-ARBA"/>
</dbReference>
<dbReference type="GO" id="GO:0006152">
    <property type="term" value="P:purine nucleoside catabolic process"/>
    <property type="evidence" value="ECO:0007669"/>
    <property type="project" value="TreeGrafter"/>
</dbReference>
<dbReference type="GO" id="GO:0006206">
    <property type="term" value="P:pyrimidine nucleobase metabolic process"/>
    <property type="evidence" value="ECO:0007669"/>
    <property type="project" value="UniProtKB-UniRule"/>
</dbReference>
<dbReference type="GO" id="GO:0046133">
    <property type="term" value="P:pyrimidine ribonucleoside catabolic process"/>
    <property type="evidence" value="ECO:0007669"/>
    <property type="project" value="InterPro"/>
</dbReference>
<dbReference type="CDD" id="cd02651">
    <property type="entry name" value="nuc_hydro_IU_UC_XIUA"/>
    <property type="match status" value="1"/>
</dbReference>
<dbReference type="FunFam" id="3.90.245.10:FF:000003">
    <property type="entry name" value="Pyrimidine-specific ribonucleoside hydrolase RihB"/>
    <property type="match status" value="1"/>
</dbReference>
<dbReference type="Gene3D" id="3.90.245.10">
    <property type="entry name" value="Ribonucleoside hydrolase-like"/>
    <property type="match status" value="1"/>
</dbReference>
<dbReference type="HAMAP" id="MF_01433">
    <property type="entry name" value="Pyrim_hydro_RihB"/>
    <property type="match status" value="1"/>
</dbReference>
<dbReference type="InterPro" id="IPR015910">
    <property type="entry name" value="I/U_nuclsd_hydro_CS"/>
</dbReference>
<dbReference type="InterPro" id="IPR001910">
    <property type="entry name" value="Inosine/uridine_hydrolase_dom"/>
</dbReference>
<dbReference type="InterPro" id="IPR023186">
    <property type="entry name" value="IUNH"/>
</dbReference>
<dbReference type="InterPro" id="IPR022977">
    <property type="entry name" value="Pyrim_hydro_RihB"/>
</dbReference>
<dbReference type="InterPro" id="IPR036452">
    <property type="entry name" value="Ribo_hydro-like"/>
</dbReference>
<dbReference type="NCBIfam" id="NF007417">
    <property type="entry name" value="PRK09955.1"/>
    <property type="match status" value="1"/>
</dbReference>
<dbReference type="PANTHER" id="PTHR12304">
    <property type="entry name" value="INOSINE-URIDINE PREFERRING NUCLEOSIDE HYDROLASE"/>
    <property type="match status" value="1"/>
</dbReference>
<dbReference type="PANTHER" id="PTHR12304:SF4">
    <property type="entry name" value="URIDINE NUCLEOSIDASE"/>
    <property type="match status" value="1"/>
</dbReference>
<dbReference type="Pfam" id="PF01156">
    <property type="entry name" value="IU_nuc_hydro"/>
    <property type="match status" value="1"/>
</dbReference>
<dbReference type="SUPFAM" id="SSF53590">
    <property type="entry name" value="Nucleoside hydrolase"/>
    <property type="match status" value="1"/>
</dbReference>
<dbReference type="PROSITE" id="PS01247">
    <property type="entry name" value="IUNH"/>
    <property type="match status" value="1"/>
</dbReference>
<evidence type="ECO:0000255" key="1">
    <source>
        <dbReference type="HAMAP-Rule" id="MF_01433"/>
    </source>
</evidence>
<sequence length="313" mass="33766">MEKRKIILDCDPGHDDAIAIMMAAKHPAIDLLGITIVAGNQTLDKTLINGLNVCQKLEINVPVYAGMPQPIMRQQIVADNIHGETGLDGPVFEPLTRQAESTHAVKYIIDTLMASDGDITLVPVGPLSNIAVAMRMQPAILPKIREIVLMGGAYGTGNFTPSAEFNIFADPEAARVVFTSGVPLVMMGLDLTNQTVCTPDVIARMERAGGPAGEMFSDIMNFTLKTQFENYGLAGGPVHDATCIGYLINPDGIKTQEMYVEVDVNSGPCYGRTVCDELGVLGKPANTKVGITIDTDWFWGLVEECVRGYIKTH</sequence>
<proteinExistence type="inferred from homology"/>
<keyword id="KW-0106">Calcium</keyword>
<keyword id="KW-0326">Glycosidase</keyword>
<keyword id="KW-0378">Hydrolase</keyword>
<keyword id="KW-0479">Metal-binding</keyword>
<keyword id="KW-1185">Reference proteome</keyword>
<name>RIHB_SHISS</name>
<protein>
    <recommendedName>
        <fullName evidence="1">Pyrimidine-specific ribonucleoside hydrolase RihB</fullName>
        <ecNumber evidence="1">3.2.2.8</ecNumber>
    </recommendedName>
    <alternativeName>
        <fullName evidence="1">Cytidine/uridine-specific hydrolase</fullName>
    </alternativeName>
</protein>
<feature type="chain" id="PRO_0000206830" description="Pyrimidine-specific ribonucleoside hydrolase RihB">
    <location>
        <begin position="1"/>
        <end position="313"/>
    </location>
</feature>
<feature type="active site" description="Proton acceptor" evidence="1">
    <location>
        <position position="11"/>
    </location>
</feature>
<feature type="binding site" evidence="1">
    <location>
        <position position="11"/>
    </location>
    <ligand>
        <name>Ca(2+)</name>
        <dbReference type="ChEBI" id="CHEBI:29108"/>
    </ligand>
</feature>
<feature type="binding site" evidence="1">
    <location>
        <position position="16"/>
    </location>
    <ligand>
        <name>Ca(2+)</name>
        <dbReference type="ChEBI" id="CHEBI:29108"/>
    </ligand>
</feature>
<feature type="binding site" evidence="1">
    <location>
        <position position="124"/>
    </location>
    <ligand>
        <name>Ca(2+)</name>
        <dbReference type="ChEBI" id="CHEBI:29108"/>
    </ligand>
</feature>
<feature type="binding site" evidence="1">
    <location>
        <position position="227"/>
    </location>
    <ligand>
        <name>substrate</name>
    </ligand>
</feature>
<feature type="binding site" evidence="1">
    <location>
        <position position="239"/>
    </location>
    <ligand>
        <name>substrate</name>
    </ligand>
</feature>
<feature type="binding site" evidence="1">
    <location>
        <position position="240"/>
    </location>
    <ligand>
        <name>Ca(2+)</name>
        <dbReference type="ChEBI" id="CHEBI:29108"/>
    </ligand>
</feature>
<organism>
    <name type="scientific">Shigella sonnei (strain Ss046)</name>
    <dbReference type="NCBI Taxonomy" id="300269"/>
    <lineage>
        <taxon>Bacteria</taxon>
        <taxon>Pseudomonadati</taxon>
        <taxon>Pseudomonadota</taxon>
        <taxon>Gammaproteobacteria</taxon>
        <taxon>Enterobacterales</taxon>
        <taxon>Enterobacteriaceae</taxon>
        <taxon>Shigella</taxon>
    </lineage>
</organism>
<gene>
    <name evidence="1" type="primary">rihB</name>
    <name type="ordered locus">SSON_2218</name>
</gene>
<accession>Q3Z044</accession>
<reference key="1">
    <citation type="journal article" date="2005" name="Nucleic Acids Res.">
        <title>Genome dynamics and diversity of Shigella species, the etiologic agents of bacillary dysentery.</title>
        <authorList>
            <person name="Yang F."/>
            <person name="Yang J."/>
            <person name="Zhang X."/>
            <person name="Chen L."/>
            <person name="Jiang Y."/>
            <person name="Yan Y."/>
            <person name="Tang X."/>
            <person name="Wang J."/>
            <person name="Xiong Z."/>
            <person name="Dong J."/>
            <person name="Xue Y."/>
            <person name="Zhu Y."/>
            <person name="Xu X."/>
            <person name="Sun L."/>
            <person name="Chen S."/>
            <person name="Nie H."/>
            <person name="Peng J."/>
            <person name="Xu J."/>
            <person name="Wang Y."/>
            <person name="Yuan Z."/>
            <person name="Wen Y."/>
            <person name="Yao Z."/>
            <person name="Shen Y."/>
            <person name="Qiang B."/>
            <person name="Hou Y."/>
            <person name="Yu J."/>
            <person name="Jin Q."/>
        </authorList>
    </citation>
    <scope>NUCLEOTIDE SEQUENCE [LARGE SCALE GENOMIC DNA]</scope>
    <source>
        <strain>Ss046</strain>
    </source>
</reference>
<comment type="function">
    <text evidence="1">Hydrolyzes cytidine or uridine to ribose and cytosine or uracil, respectively. Has a clear preference for cytidine over uridine. Strictly specific for ribonucleosides.</text>
</comment>
<comment type="catalytic activity">
    <reaction evidence="1">
        <text>a pyrimidine ribonucleoside + H2O = a pyrimidine nucleobase + D-ribose</text>
        <dbReference type="Rhea" id="RHEA:56816"/>
        <dbReference type="ChEBI" id="CHEBI:15377"/>
        <dbReference type="ChEBI" id="CHEBI:26432"/>
        <dbReference type="ChEBI" id="CHEBI:47013"/>
        <dbReference type="ChEBI" id="CHEBI:141014"/>
        <dbReference type="EC" id="3.2.2.8"/>
    </reaction>
</comment>
<comment type="cofactor">
    <cofactor evidence="1">
        <name>Ca(2+)</name>
        <dbReference type="ChEBI" id="CHEBI:29108"/>
    </cofactor>
    <text evidence="1">Binds 1 Ca(2+) ion per monomer.</text>
</comment>
<comment type="subunit">
    <text evidence="1">Homotetramer.</text>
</comment>
<comment type="similarity">
    <text evidence="1">Belongs to the IUNH family. RihB subfamily.</text>
</comment>